<organism>
    <name type="scientific">Dictyostelium discoideum</name>
    <name type="common">Social amoeba</name>
    <dbReference type="NCBI Taxonomy" id="44689"/>
    <lineage>
        <taxon>Eukaryota</taxon>
        <taxon>Amoebozoa</taxon>
        <taxon>Evosea</taxon>
        <taxon>Eumycetozoa</taxon>
        <taxon>Dictyostelia</taxon>
        <taxon>Dictyosteliales</taxon>
        <taxon>Dictyosteliaceae</taxon>
        <taxon>Dictyostelium</taxon>
    </lineage>
</organism>
<feature type="chain" id="PRO_0000390458" description="Ribosomal RNA-processing protein 8">
    <location>
        <begin position="1"/>
        <end position="390"/>
    </location>
</feature>
<feature type="region of interest" description="Disordered" evidence="3">
    <location>
        <begin position="1"/>
        <end position="85"/>
    </location>
</feature>
<feature type="region of interest" description="Disordered" evidence="3">
    <location>
        <begin position="106"/>
        <end position="160"/>
    </location>
</feature>
<feature type="compositionally biased region" description="Low complexity" evidence="3">
    <location>
        <begin position="22"/>
        <end position="71"/>
    </location>
</feature>
<feature type="compositionally biased region" description="Low complexity" evidence="3">
    <location>
        <begin position="140"/>
        <end position="152"/>
    </location>
</feature>
<feature type="binding site" evidence="2">
    <location>
        <position position="201"/>
    </location>
    <ligand>
        <name>S-adenosyl-L-methionine</name>
        <dbReference type="ChEBI" id="CHEBI:59789"/>
    </ligand>
</feature>
<feature type="binding site" evidence="2">
    <location>
        <position position="236"/>
    </location>
    <ligand>
        <name>S-adenosyl-L-methionine</name>
        <dbReference type="ChEBI" id="CHEBI:59789"/>
    </ligand>
</feature>
<feature type="binding site" evidence="2">
    <location>
        <position position="256"/>
    </location>
    <ligand>
        <name>S-adenosyl-L-methionine</name>
        <dbReference type="ChEBI" id="CHEBI:59789"/>
    </ligand>
</feature>
<feature type="binding site" evidence="2">
    <location>
        <position position="268"/>
    </location>
    <ligand>
        <name>S-adenosyl-L-methionine</name>
        <dbReference type="ChEBI" id="CHEBI:59789"/>
    </ligand>
</feature>
<feature type="binding site" evidence="2">
    <location>
        <position position="285"/>
    </location>
    <ligand>
        <name>S-adenosyl-L-methionine</name>
        <dbReference type="ChEBI" id="CHEBI:59789"/>
    </ligand>
</feature>
<name>RRP8_DICDI</name>
<reference key="1">
    <citation type="journal article" date="2005" name="Nature">
        <title>The genome of the social amoeba Dictyostelium discoideum.</title>
        <authorList>
            <person name="Eichinger L."/>
            <person name="Pachebat J.A."/>
            <person name="Gloeckner G."/>
            <person name="Rajandream M.A."/>
            <person name="Sucgang R."/>
            <person name="Berriman M."/>
            <person name="Song J."/>
            <person name="Olsen R."/>
            <person name="Szafranski K."/>
            <person name="Xu Q."/>
            <person name="Tunggal B."/>
            <person name="Kummerfeld S."/>
            <person name="Madera M."/>
            <person name="Konfortov B.A."/>
            <person name="Rivero F."/>
            <person name="Bankier A.T."/>
            <person name="Lehmann R."/>
            <person name="Hamlin N."/>
            <person name="Davies R."/>
            <person name="Gaudet P."/>
            <person name="Fey P."/>
            <person name="Pilcher K."/>
            <person name="Chen G."/>
            <person name="Saunders D."/>
            <person name="Sodergren E.J."/>
            <person name="Davis P."/>
            <person name="Kerhornou A."/>
            <person name="Nie X."/>
            <person name="Hall N."/>
            <person name="Anjard C."/>
            <person name="Hemphill L."/>
            <person name="Bason N."/>
            <person name="Farbrother P."/>
            <person name="Desany B."/>
            <person name="Just E."/>
            <person name="Morio T."/>
            <person name="Rost R."/>
            <person name="Churcher C.M."/>
            <person name="Cooper J."/>
            <person name="Haydock S."/>
            <person name="van Driessche N."/>
            <person name="Cronin A."/>
            <person name="Goodhead I."/>
            <person name="Muzny D.M."/>
            <person name="Mourier T."/>
            <person name="Pain A."/>
            <person name="Lu M."/>
            <person name="Harper D."/>
            <person name="Lindsay R."/>
            <person name="Hauser H."/>
            <person name="James K.D."/>
            <person name="Quiles M."/>
            <person name="Madan Babu M."/>
            <person name="Saito T."/>
            <person name="Buchrieser C."/>
            <person name="Wardroper A."/>
            <person name="Felder M."/>
            <person name="Thangavelu M."/>
            <person name="Johnson D."/>
            <person name="Knights A."/>
            <person name="Loulseged H."/>
            <person name="Mungall K.L."/>
            <person name="Oliver K."/>
            <person name="Price C."/>
            <person name="Quail M.A."/>
            <person name="Urushihara H."/>
            <person name="Hernandez J."/>
            <person name="Rabbinowitsch E."/>
            <person name="Steffen D."/>
            <person name="Sanders M."/>
            <person name="Ma J."/>
            <person name="Kohara Y."/>
            <person name="Sharp S."/>
            <person name="Simmonds M.N."/>
            <person name="Spiegler S."/>
            <person name="Tivey A."/>
            <person name="Sugano S."/>
            <person name="White B."/>
            <person name="Walker D."/>
            <person name="Woodward J.R."/>
            <person name="Winckler T."/>
            <person name="Tanaka Y."/>
            <person name="Shaulsky G."/>
            <person name="Schleicher M."/>
            <person name="Weinstock G.M."/>
            <person name="Rosenthal A."/>
            <person name="Cox E.C."/>
            <person name="Chisholm R.L."/>
            <person name="Gibbs R.A."/>
            <person name="Loomis W.F."/>
            <person name="Platzer M."/>
            <person name="Kay R.R."/>
            <person name="Williams J.G."/>
            <person name="Dear P.H."/>
            <person name="Noegel A.A."/>
            <person name="Barrell B.G."/>
            <person name="Kuspa A."/>
        </authorList>
    </citation>
    <scope>NUCLEOTIDE SEQUENCE [LARGE SCALE GENOMIC DNA]</scope>
    <source>
        <strain>AX4</strain>
    </source>
</reference>
<accession>Q54CP1</accession>
<sequence length="390" mass="45193">MTNTKKSKQKNTVGNKVKKTNTNKNNNNNNNNNNKNKQNKINNKNNKNNKNNDSNNKNNNTNNKNNINIKNKNLKKVENNKSLKVISSNKNKNILNNLKKEEKVNSNDILIQQQQNREKEDITNEDDDEKYNLWNPKPTSSVSVSSSKSSKSLKTTDLQNEMSEKLKGSRFRWLNETLYTTHSKEAFKEFSEDRSLFDQYHSGFKSQVESWPINPLDLIIDDLSSIKQRKRIADLGCGEAKLAERLQHKHTIQSFDLVAVNERVTACDISNLPLKNESIDIAVFCLSLMGTNFIDFIIEAERVLVKGGLLKIAEIESRITDINAFTNEIQQHGFNLIKKNEQNQYFTLFEFSKLQKKDQQFMRSLKQYQKLKKQQATNEPVLKPCLYKKR</sequence>
<gene>
    <name type="primary">rrp8</name>
    <name type="ORF">DDB_G0292960</name>
</gene>
<evidence type="ECO:0000250" key="1"/>
<evidence type="ECO:0000250" key="2">
    <source>
        <dbReference type="UniProtKB" id="O43159"/>
    </source>
</evidence>
<evidence type="ECO:0000256" key="3">
    <source>
        <dbReference type="SAM" id="MobiDB-lite"/>
    </source>
</evidence>
<evidence type="ECO:0000305" key="4"/>
<proteinExistence type="inferred from homology"/>
<comment type="function">
    <text evidence="1">Probable methyltransferase required to silence rDNA.</text>
</comment>
<comment type="subcellular location">
    <subcellularLocation>
        <location evidence="1">Nucleus</location>
        <location evidence="1">Nucleolus</location>
    </subcellularLocation>
</comment>
<comment type="similarity">
    <text evidence="4">Belongs to the methyltransferase superfamily. RRP8 family.</text>
</comment>
<dbReference type="EC" id="2.1.1.-"/>
<dbReference type="EMBL" id="AAFI02000197">
    <property type="protein sequence ID" value="EAL61029.1"/>
    <property type="molecule type" value="Genomic_DNA"/>
</dbReference>
<dbReference type="RefSeq" id="XP_629375.1">
    <property type="nucleotide sequence ID" value="XM_629373.1"/>
</dbReference>
<dbReference type="SMR" id="Q54CP1"/>
<dbReference type="FunCoup" id="Q54CP1">
    <property type="interactions" value="443"/>
</dbReference>
<dbReference type="STRING" id="44689.Q54CP1"/>
<dbReference type="PaxDb" id="44689-DDB0219795"/>
<dbReference type="EnsemblProtists" id="EAL61029">
    <property type="protein sequence ID" value="EAL61029"/>
    <property type="gene ID" value="DDB_G0292960"/>
</dbReference>
<dbReference type="GeneID" id="8628893"/>
<dbReference type="KEGG" id="ddi:DDB_G0292960"/>
<dbReference type="dictyBase" id="DDB_G0292960"/>
<dbReference type="VEuPathDB" id="AmoebaDB:DDB_G0292960"/>
<dbReference type="eggNOG" id="KOG3045">
    <property type="taxonomic scope" value="Eukaryota"/>
</dbReference>
<dbReference type="HOGENOM" id="CLU_027694_2_1_1"/>
<dbReference type="InParanoid" id="Q54CP1"/>
<dbReference type="OMA" id="YVTACNI"/>
<dbReference type="PhylomeDB" id="Q54CP1"/>
<dbReference type="Reactome" id="R-DDI-427359">
    <property type="pathway name" value="SIRT1 negatively regulates rRNA expression"/>
</dbReference>
<dbReference type="PRO" id="PR:Q54CP1"/>
<dbReference type="Proteomes" id="UP000002195">
    <property type="component" value="Chromosome 6"/>
</dbReference>
<dbReference type="GO" id="GO:0005677">
    <property type="term" value="C:chromatin silencing complex"/>
    <property type="evidence" value="ECO:0000250"/>
    <property type="project" value="UniProtKB"/>
</dbReference>
<dbReference type="GO" id="GO:0005730">
    <property type="term" value="C:nucleolus"/>
    <property type="evidence" value="ECO:0000250"/>
    <property type="project" value="UniProtKB"/>
</dbReference>
<dbReference type="GO" id="GO:0033553">
    <property type="term" value="C:rDNA heterochromatin"/>
    <property type="evidence" value="ECO:0000250"/>
    <property type="project" value="UniProtKB"/>
</dbReference>
<dbReference type="GO" id="GO:0035064">
    <property type="term" value="F:methylated histone binding"/>
    <property type="evidence" value="ECO:0000250"/>
    <property type="project" value="UniProtKB"/>
</dbReference>
<dbReference type="GO" id="GO:0008168">
    <property type="term" value="F:methyltransferase activity"/>
    <property type="evidence" value="ECO:0007669"/>
    <property type="project" value="UniProtKB-KW"/>
</dbReference>
<dbReference type="GO" id="GO:0032259">
    <property type="term" value="P:methylation"/>
    <property type="evidence" value="ECO:0007669"/>
    <property type="project" value="UniProtKB-KW"/>
</dbReference>
<dbReference type="GO" id="GO:0000183">
    <property type="term" value="P:rDNA heterochromatin formation"/>
    <property type="evidence" value="ECO:0000250"/>
    <property type="project" value="UniProtKB"/>
</dbReference>
<dbReference type="GO" id="GO:0006364">
    <property type="term" value="P:rRNA processing"/>
    <property type="evidence" value="ECO:0007669"/>
    <property type="project" value="UniProtKB-KW"/>
</dbReference>
<dbReference type="CDD" id="cd02440">
    <property type="entry name" value="AdoMet_MTases"/>
    <property type="match status" value="1"/>
</dbReference>
<dbReference type="FunFam" id="1.10.10.2150:FF:000001">
    <property type="entry name" value="Ribosomal RNA-processing protein 8"/>
    <property type="match status" value="1"/>
</dbReference>
<dbReference type="FunFam" id="3.40.50.150:FF:000068">
    <property type="entry name" value="Ribosomal RNA-processing protein 8"/>
    <property type="match status" value="1"/>
</dbReference>
<dbReference type="Gene3D" id="1.10.10.2150">
    <property type="entry name" value="Ribosomal RNA-processing protein 8, N-terminal domain"/>
    <property type="match status" value="1"/>
</dbReference>
<dbReference type="Gene3D" id="3.40.50.150">
    <property type="entry name" value="Vaccinia Virus protein VP39"/>
    <property type="match status" value="1"/>
</dbReference>
<dbReference type="InterPro" id="IPR007823">
    <property type="entry name" value="RRP8"/>
</dbReference>
<dbReference type="InterPro" id="IPR042036">
    <property type="entry name" value="RRP8_N"/>
</dbReference>
<dbReference type="InterPro" id="IPR029063">
    <property type="entry name" value="SAM-dependent_MTases_sf"/>
</dbReference>
<dbReference type="PANTHER" id="PTHR12787">
    <property type="entry name" value="RIBOSOMAL RNA-PROCESSING PROTEIN 8"/>
    <property type="match status" value="1"/>
</dbReference>
<dbReference type="PANTHER" id="PTHR12787:SF0">
    <property type="entry name" value="RIBOSOMAL RNA-PROCESSING PROTEIN 8"/>
    <property type="match status" value="1"/>
</dbReference>
<dbReference type="Pfam" id="PF05148">
    <property type="entry name" value="Methyltransf_8"/>
    <property type="match status" value="1"/>
</dbReference>
<dbReference type="SUPFAM" id="SSF53335">
    <property type="entry name" value="S-adenosyl-L-methionine-dependent methyltransferases"/>
    <property type="match status" value="1"/>
</dbReference>
<protein>
    <recommendedName>
        <fullName>Ribosomal RNA-processing protein 8</fullName>
        <ecNumber>2.1.1.-</ecNumber>
    </recommendedName>
</protein>
<keyword id="KW-0156">Chromatin regulator</keyword>
<keyword id="KW-0489">Methyltransferase</keyword>
<keyword id="KW-0539">Nucleus</keyword>
<keyword id="KW-1185">Reference proteome</keyword>
<keyword id="KW-0678">Repressor</keyword>
<keyword id="KW-0698">rRNA processing</keyword>
<keyword id="KW-0949">S-adenosyl-L-methionine</keyword>
<keyword id="KW-0804">Transcription</keyword>
<keyword id="KW-0805">Transcription regulation</keyword>
<keyword id="KW-0808">Transferase</keyword>